<feature type="chain" id="PRO_0000068569" description="Kanamycin resistance protein">
    <location>
        <begin position="1" status="less than"/>
        <end position="108"/>
    </location>
</feature>
<feature type="domain" description="N-acetyltransferase" evidence="1">
    <location>
        <begin position="1"/>
        <end position="99"/>
    </location>
</feature>
<feature type="non-terminal residue">
    <location>
        <position position="1"/>
    </location>
</feature>
<reference key="1">
    <citation type="journal article" date="1985" name="Gene">
        <title>The aminoglycoside-resistance operon of the plasmid pSa: nucleotide sequence of the streptomycin-spectinomycin resistance gene.</title>
        <authorList>
            <person name="Tait R.C."/>
            <person name="Rempel H."/>
            <person name="Rodriguez R.L."/>
            <person name="Kado C.I."/>
        </authorList>
    </citation>
    <scope>NUCLEOTIDE SEQUENCE [GENOMIC DNA]</scope>
</reference>
<dbReference type="EMBL" id="M11444">
    <property type="protein sequence ID" value="AAA25646.1"/>
    <property type="molecule type" value="Genomic_DNA"/>
</dbReference>
<dbReference type="PIR" id="A23957">
    <property type="entry name" value="A23957"/>
</dbReference>
<dbReference type="SMR" id="P14510"/>
<dbReference type="GO" id="GO:0016410">
    <property type="term" value="F:N-acyltransferase activity"/>
    <property type="evidence" value="ECO:0007669"/>
    <property type="project" value="TreeGrafter"/>
</dbReference>
<dbReference type="GO" id="GO:0046677">
    <property type="term" value="P:response to antibiotic"/>
    <property type="evidence" value="ECO:0007669"/>
    <property type="project" value="UniProtKB-KW"/>
</dbReference>
<dbReference type="Gene3D" id="3.40.630.30">
    <property type="match status" value="1"/>
</dbReference>
<dbReference type="InterPro" id="IPR016181">
    <property type="entry name" value="Acyl_CoA_acyltransferase"/>
</dbReference>
<dbReference type="InterPro" id="IPR000182">
    <property type="entry name" value="GNAT_dom"/>
</dbReference>
<dbReference type="PANTHER" id="PTHR31438">
    <property type="entry name" value="LYSINE N-ACYLTRANSFERASE C17G9.06C-RELATED"/>
    <property type="match status" value="1"/>
</dbReference>
<dbReference type="PANTHER" id="PTHR31438:SF1">
    <property type="entry name" value="LYSINE N-ACYLTRANSFERASE C17G9.06C-RELATED"/>
    <property type="match status" value="1"/>
</dbReference>
<dbReference type="Pfam" id="PF13523">
    <property type="entry name" value="Acetyltransf_8"/>
    <property type="match status" value="1"/>
</dbReference>
<dbReference type="SUPFAM" id="SSF55729">
    <property type="entry name" value="Acyl-CoA N-acyltransferases (Nat)"/>
    <property type="match status" value="1"/>
</dbReference>
<dbReference type="PROSITE" id="PS51186">
    <property type="entry name" value="GNAT"/>
    <property type="match status" value="1"/>
</dbReference>
<geneLocation type="plasmid">
    <name>IncW pSa</name>
</geneLocation>
<accession>P14510</accession>
<name>KANR_RHIRD</name>
<evidence type="ECO:0000255" key="1">
    <source>
        <dbReference type="PROSITE-ProRule" id="PRU00532"/>
    </source>
</evidence>
<protein>
    <recommendedName>
        <fullName>Kanamycin resistance protein</fullName>
        <shortName>KM-R</shortName>
    </recommendedName>
</protein>
<proteinExistence type="predicted"/>
<sequence>SRTLLLERGRWWEEETDPGVRGIDQSLANASQLGKGLGTKLVRALVELLFNDPEVTKIQTDPSPSNLRAIRCYEKAGFERQGTVTTPDGPAVYMVQTRQAFERTRSDA</sequence>
<organism>
    <name type="scientific">Rhizobium radiobacter</name>
    <name type="common">Agrobacterium tumefaciens</name>
    <name type="synonym">Agrobacterium radiobacter</name>
    <dbReference type="NCBI Taxonomy" id="358"/>
    <lineage>
        <taxon>Bacteria</taxon>
        <taxon>Pseudomonadati</taxon>
        <taxon>Pseudomonadota</taxon>
        <taxon>Alphaproteobacteria</taxon>
        <taxon>Hyphomicrobiales</taxon>
        <taxon>Rhizobiaceae</taxon>
        <taxon>Rhizobium/Agrobacterium group</taxon>
        <taxon>Agrobacterium</taxon>
        <taxon>Agrobacterium tumefaciens complex</taxon>
    </lineage>
</organism>
<keyword id="KW-0046">Antibiotic resistance</keyword>
<keyword id="KW-0614">Plasmid</keyword>